<proteinExistence type="inferred from homology"/>
<accession>Q2LPL7</accession>
<protein>
    <recommendedName>
        <fullName evidence="1">Alanine--tRNA ligase</fullName>
        <ecNumber evidence="1">6.1.1.7</ecNumber>
    </recommendedName>
    <alternativeName>
        <fullName evidence="1">Alanyl-tRNA synthetase</fullName>
        <shortName evidence="1">AlaRS</shortName>
    </alternativeName>
</protein>
<organism>
    <name type="scientific">Syntrophus aciditrophicus (strain SB)</name>
    <dbReference type="NCBI Taxonomy" id="56780"/>
    <lineage>
        <taxon>Bacteria</taxon>
        <taxon>Pseudomonadati</taxon>
        <taxon>Thermodesulfobacteriota</taxon>
        <taxon>Syntrophia</taxon>
        <taxon>Syntrophales</taxon>
        <taxon>Syntrophaceae</taxon>
        <taxon>Syntrophus</taxon>
    </lineage>
</organism>
<keyword id="KW-0030">Aminoacyl-tRNA synthetase</keyword>
<keyword id="KW-0067">ATP-binding</keyword>
<keyword id="KW-0963">Cytoplasm</keyword>
<keyword id="KW-0436">Ligase</keyword>
<keyword id="KW-0479">Metal-binding</keyword>
<keyword id="KW-0547">Nucleotide-binding</keyword>
<keyword id="KW-0648">Protein biosynthesis</keyword>
<keyword id="KW-1185">Reference proteome</keyword>
<keyword id="KW-0694">RNA-binding</keyword>
<keyword id="KW-0820">tRNA-binding</keyword>
<keyword id="KW-0862">Zinc</keyword>
<evidence type="ECO:0000255" key="1">
    <source>
        <dbReference type="HAMAP-Rule" id="MF_00036"/>
    </source>
</evidence>
<comment type="function">
    <text evidence="1">Catalyzes the attachment of alanine to tRNA(Ala) in a two-step reaction: alanine is first activated by ATP to form Ala-AMP and then transferred to the acceptor end of tRNA(Ala). Also edits incorrectly charged Ser-tRNA(Ala) and Gly-tRNA(Ala) via its editing domain.</text>
</comment>
<comment type="catalytic activity">
    <reaction evidence="1">
        <text>tRNA(Ala) + L-alanine + ATP = L-alanyl-tRNA(Ala) + AMP + diphosphate</text>
        <dbReference type="Rhea" id="RHEA:12540"/>
        <dbReference type="Rhea" id="RHEA-COMP:9657"/>
        <dbReference type="Rhea" id="RHEA-COMP:9923"/>
        <dbReference type="ChEBI" id="CHEBI:30616"/>
        <dbReference type="ChEBI" id="CHEBI:33019"/>
        <dbReference type="ChEBI" id="CHEBI:57972"/>
        <dbReference type="ChEBI" id="CHEBI:78442"/>
        <dbReference type="ChEBI" id="CHEBI:78497"/>
        <dbReference type="ChEBI" id="CHEBI:456215"/>
        <dbReference type="EC" id="6.1.1.7"/>
    </reaction>
</comment>
<comment type="cofactor">
    <cofactor evidence="1">
        <name>Zn(2+)</name>
        <dbReference type="ChEBI" id="CHEBI:29105"/>
    </cofactor>
    <text evidence="1">Binds 1 zinc ion per subunit.</text>
</comment>
<comment type="subcellular location">
    <subcellularLocation>
        <location evidence="1">Cytoplasm</location>
    </subcellularLocation>
</comment>
<comment type="domain">
    <text evidence="1">Consists of three domains; the N-terminal catalytic domain, the editing domain and the C-terminal C-Ala domain. The editing domain removes incorrectly charged amino acids, while the C-Ala domain, along with tRNA(Ala), serves as a bridge to cooperatively bring together the editing and aminoacylation centers thus stimulating deacylation of misacylated tRNAs.</text>
</comment>
<comment type="similarity">
    <text evidence="1">Belongs to the class-II aminoacyl-tRNA synthetase family.</text>
</comment>
<name>SYA_SYNAS</name>
<dbReference type="EC" id="6.1.1.7" evidence="1"/>
<dbReference type="EMBL" id="CP000252">
    <property type="protein sequence ID" value="ABC76219.1"/>
    <property type="molecule type" value="Genomic_DNA"/>
</dbReference>
<dbReference type="RefSeq" id="WP_011416253.1">
    <property type="nucleotide sequence ID" value="NC_007759.1"/>
</dbReference>
<dbReference type="SMR" id="Q2LPL7"/>
<dbReference type="FunCoup" id="Q2LPL7">
    <property type="interactions" value="515"/>
</dbReference>
<dbReference type="STRING" id="56780.SYN_02026"/>
<dbReference type="KEGG" id="sat:SYN_02026"/>
<dbReference type="eggNOG" id="COG0013">
    <property type="taxonomic scope" value="Bacteria"/>
</dbReference>
<dbReference type="HOGENOM" id="CLU_004485_1_1_7"/>
<dbReference type="InParanoid" id="Q2LPL7"/>
<dbReference type="OrthoDB" id="9803884at2"/>
<dbReference type="Proteomes" id="UP000001933">
    <property type="component" value="Chromosome"/>
</dbReference>
<dbReference type="GO" id="GO:0005829">
    <property type="term" value="C:cytosol"/>
    <property type="evidence" value="ECO:0007669"/>
    <property type="project" value="TreeGrafter"/>
</dbReference>
<dbReference type="GO" id="GO:0004813">
    <property type="term" value="F:alanine-tRNA ligase activity"/>
    <property type="evidence" value="ECO:0007669"/>
    <property type="project" value="UniProtKB-UniRule"/>
</dbReference>
<dbReference type="GO" id="GO:0002161">
    <property type="term" value="F:aminoacyl-tRNA deacylase activity"/>
    <property type="evidence" value="ECO:0007669"/>
    <property type="project" value="TreeGrafter"/>
</dbReference>
<dbReference type="GO" id="GO:0005524">
    <property type="term" value="F:ATP binding"/>
    <property type="evidence" value="ECO:0007669"/>
    <property type="project" value="UniProtKB-UniRule"/>
</dbReference>
<dbReference type="GO" id="GO:0000049">
    <property type="term" value="F:tRNA binding"/>
    <property type="evidence" value="ECO:0007669"/>
    <property type="project" value="UniProtKB-KW"/>
</dbReference>
<dbReference type="GO" id="GO:0008270">
    <property type="term" value="F:zinc ion binding"/>
    <property type="evidence" value="ECO:0007669"/>
    <property type="project" value="UniProtKB-UniRule"/>
</dbReference>
<dbReference type="GO" id="GO:0006419">
    <property type="term" value="P:alanyl-tRNA aminoacylation"/>
    <property type="evidence" value="ECO:0007669"/>
    <property type="project" value="UniProtKB-UniRule"/>
</dbReference>
<dbReference type="GO" id="GO:0045892">
    <property type="term" value="P:negative regulation of DNA-templated transcription"/>
    <property type="evidence" value="ECO:0007669"/>
    <property type="project" value="TreeGrafter"/>
</dbReference>
<dbReference type="CDD" id="cd00673">
    <property type="entry name" value="AlaRS_core"/>
    <property type="match status" value="1"/>
</dbReference>
<dbReference type="FunFam" id="3.10.310.40:FF:000001">
    <property type="entry name" value="Alanine--tRNA ligase"/>
    <property type="match status" value="1"/>
</dbReference>
<dbReference type="FunFam" id="3.30.54.20:FF:000001">
    <property type="entry name" value="Alanine--tRNA ligase"/>
    <property type="match status" value="1"/>
</dbReference>
<dbReference type="FunFam" id="3.30.930.10:FF:000004">
    <property type="entry name" value="Alanine--tRNA ligase"/>
    <property type="match status" value="1"/>
</dbReference>
<dbReference type="FunFam" id="3.30.980.10:FF:000004">
    <property type="entry name" value="Alanine--tRNA ligase, cytoplasmic"/>
    <property type="match status" value="1"/>
</dbReference>
<dbReference type="Gene3D" id="2.40.30.130">
    <property type="match status" value="1"/>
</dbReference>
<dbReference type="Gene3D" id="3.10.310.40">
    <property type="match status" value="1"/>
</dbReference>
<dbReference type="Gene3D" id="3.30.54.20">
    <property type="match status" value="1"/>
</dbReference>
<dbReference type="Gene3D" id="6.10.250.550">
    <property type="match status" value="1"/>
</dbReference>
<dbReference type="Gene3D" id="3.30.930.10">
    <property type="entry name" value="Bira Bifunctional Protein, Domain 2"/>
    <property type="match status" value="1"/>
</dbReference>
<dbReference type="Gene3D" id="3.30.980.10">
    <property type="entry name" value="Threonyl-trna Synthetase, Chain A, domain 2"/>
    <property type="match status" value="1"/>
</dbReference>
<dbReference type="HAMAP" id="MF_00036_B">
    <property type="entry name" value="Ala_tRNA_synth_B"/>
    <property type="match status" value="1"/>
</dbReference>
<dbReference type="InterPro" id="IPR045864">
    <property type="entry name" value="aa-tRNA-synth_II/BPL/LPL"/>
</dbReference>
<dbReference type="InterPro" id="IPR002318">
    <property type="entry name" value="Ala-tRNA-lgiase_IIc"/>
</dbReference>
<dbReference type="InterPro" id="IPR018162">
    <property type="entry name" value="Ala-tRNA-ligase_IIc_anticod-bd"/>
</dbReference>
<dbReference type="InterPro" id="IPR018165">
    <property type="entry name" value="Ala-tRNA-synth_IIc_core"/>
</dbReference>
<dbReference type="InterPro" id="IPR018164">
    <property type="entry name" value="Ala-tRNA-synth_IIc_N"/>
</dbReference>
<dbReference type="InterPro" id="IPR050058">
    <property type="entry name" value="Ala-tRNA_ligase"/>
</dbReference>
<dbReference type="InterPro" id="IPR023033">
    <property type="entry name" value="Ala_tRNA_ligase_euk/bac"/>
</dbReference>
<dbReference type="InterPro" id="IPR003156">
    <property type="entry name" value="DHHA1_dom"/>
</dbReference>
<dbReference type="InterPro" id="IPR018163">
    <property type="entry name" value="Thr/Ala-tRNA-synth_IIc_edit"/>
</dbReference>
<dbReference type="InterPro" id="IPR009000">
    <property type="entry name" value="Transl_B-barrel_sf"/>
</dbReference>
<dbReference type="InterPro" id="IPR012947">
    <property type="entry name" value="tRNA_SAD"/>
</dbReference>
<dbReference type="NCBIfam" id="TIGR00344">
    <property type="entry name" value="alaS"/>
    <property type="match status" value="1"/>
</dbReference>
<dbReference type="PANTHER" id="PTHR11777:SF9">
    <property type="entry name" value="ALANINE--TRNA LIGASE, CYTOPLASMIC"/>
    <property type="match status" value="1"/>
</dbReference>
<dbReference type="PANTHER" id="PTHR11777">
    <property type="entry name" value="ALANYL-TRNA SYNTHETASE"/>
    <property type="match status" value="1"/>
</dbReference>
<dbReference type="Pfam" id="PF02272">
    <property type="entry name" value="DHHA1"/>
    <property type="match status" value="1"/>
</dbReference>
<dbReference type="Pfam" id="PF01411">
    <property type="entry name" value="tRNA-synt_2c"/>
    <property type="match status" value="1"/>
</dbReference>
<dbReference type="Pfam" id="PF07973">
    <property type="entry name" value="tRNA_SAD"/>
    <property type="match status" value="1"/>
</dbReference>
<dbReference type="PRINTS" id="PR00980">
    <property type="entry name" value="TRNASYNTHALA"/>
</dbReference>
<dbReference type="SMART" id="SM00863">
    <property type="entry name" value="tRNA_SAD"/>
    <property type="match status" value="1"/>
</dbReference>
<dbReference type="SUPFAM" id="SSF55681">
    <property type="entry name" value="Class II aaRS and biotin synthetases"/>
    <property type="match status" value="1"/>
</dbReference>
<dbReference type="SUPFAM" id="SSF101353">
    <property type="entry name" value="Putative anticodon-binding domain of alanyl-tRNA synthetase (AlaRS)"/>
    <property type="match status" value="1"/>
</dbReference>
<dbReference type="SUPFAM" id="SSF55186">
    <property type="entry name" value="ThrRS/AlaRS common domain"/>
    <property type="match status" value="1"/>
</dbReference>
<dbReference type="SUPFAM" id="SSF50447">
    <property type="entry name" value="Translation proteins"/>
    <property type="match status" value="1"/>
</dbReference>
<dbReference type="PROSITE" id="PS50860">
    <property type="entry name" value="AA_TRNA_LIGASE_II_ALA"/>
    <property type="match status" value="1"/>
</dbReference>
<sequence length="878" mass="97656">MIKAGSEIRESFLRFFEGKGHTRVSSSSLIPKDDPTLLFTNAGMVQFKNAFLGLEDRGYSRAASCQKCVRAGGKHNDLENVGFTARHHTFFEMLGNFSFGDYFKREAIAWAWEYLTEVIQLPKERLWVTVFQDDDEAYRIWLEEMRIPADRIVRLGEKSNFWMMGETGPCGPCSEIIYDQGEGTGCGRPDCHIECGCDRYLEIWNLVFTQFDRDEAGILTPLPKPNIDTGMGLERLAAVAQGVKSNYDTDLFAPLLAAISRTTGKPYGKNEEDDVSLRVIADHARSVAFLIGDGILPSNEGRGYVLRRILRRAARHGKLLGLNQPFLHELTPVVIEAMKETYPDLLDKKSYITKVILNEEQRFMETLDAGLKILQEEVSRLKKAGTTTIPGDVVFRLYDTFGFPTDLTADIVRRDNLTIDEDGFQRAMEVQREKARESWKGSGEEAISALYQKLSTQGISTVFVGHEGVCNAQSQITALLQKEELVDSLAEGEEGELIVAETPFYGEIGGQIGDTGTIEGEDFVFEVLDTRRPLDNLISHVGRVIKGRGRKGDSVNLIVAEDKRRATEANHSATHLLQAAMKTVMGNHIKQSGSLVTAERLRFDFTHFSKIEENELEQIENLANAVIRRNLPVVTRVLPLEEAMKTGATAVFDEKYGEKVRVVRMGDFSMELCGGTHIQRTGDIGFIKIIHESAIAAGVRRIEAVTGREAVNHARRVENELKKAAKLLKVSPFDLGERVEKLIKTQKDQEKEIETLKGRLAAKDSADLLSQAREIRGIRVLTAAVNAPDAKTLRDFGDKLRDRLQSGIILIGSKAEGKAMLLCLVTKDLTDRYSAGSIIREIAPVVGGKGGGRPDMAQAGGPEPENLERALKHLEEMI</sequence>
<gene>
    <name evidence="1" type="primary">alaS</name>
    <name type="ordered locus">SYNAS_03400</name>
    <name type="ORF">SYN_02026</name>
</gene>
<reference key="1">
    <citation type="journal article" date="2007" name="Proc. Natl. Acad. Sci. U.S.A.">
        <title>The genome of Syntrophus aciditrophicus: life at the thermodynamic limit of microbial growth.</title>
        <authorList>
            <person name="McInerney M.J."/>
            <person name="Rohlin L."/>
            <person name="Mouttaki H."/>
            <person name="Kim U."/>
            <person name="Krupp R.S."/>
            <person name="Rios-Hernandez L."/>
            <person name="Sieber J."/>
            <person name="Struchtemeyer C.G."/>
            <person name="Bhattacharyya A."/>
            <person name="Campbell J.W."/>
            <person name="Gunsalus R.P."/>
        </authorList>
    </citation>
    <scope>NUCLEOTIDE SEQUENCE [LARGE SCALE GENOMIC DNA]</scope>
    <source>
        <strain>SB</strain>
    </source>
</reference>
<feature type="chain" id="PRO_0000347846" description="Alanine--tRNA ligase">
    <location>
        <begin position="1"/>
        <end position="878"/>
    </location>
</feature>
<feature type="binding site" evidence="1">
    <location>
        <position position="571"/>
    </location>
    <ligand>
        <name>Zn(2+)</name>
        <dbReference type="ChEBI" id="CHEBI:29105"/>
    </ligand>
</feature>
<feature type="binding site" evidence="1">
    <location>
        <position position="575"/>
    </location>
    <ligand>
        <name>Zn(2+)</name>
        <dbReference type="ChEBI" id="CHEBI:29105"/>
    </ligand>
</feature>
<feature type="binding site" evidence="1">
    <location>
        <position position="673"/>
    </location>
    <ligand>
        <name>Zn(2+)</name>
        <dbReference type="ChEBI" id="CHEBI:29105"/>
    </ligand>
</feature>
<feature type="binding site" evidence="1">
    <location>
        <position position="677"/>
    </location>
    <ligand>
        <name>Zn(2+)</name>
        <dbReference type="ChEBI" id="CHEBI:29105"/>
    </ligand>
</feature>